<gene>
    <name type="primary">stdh-4</name>
    <name type="synonym">tag-57</name>
    <name type="ORF">F25G6.5</name>
</gene>
<proteinExistence type="inferred from homology"/>
<accession>O16925</accession>
<organism>
    <name type="scientific">Caenorhabditis elegans</name>
    <dbReference type="NCBI Taxonomy" id="6239"/>
    <lineage>
        <taxon>Eukaryota</taxon>
        <taxon>Metazoa</taxon>
        <taxon>Ecdysozoa</taxon>
        <taxon>Nematoda</taxon>
        <taxon>Chromadorea</taxon>
        <taxon>Rhabditida</taxon>
        <taxon>Rhabditina</taxon>
        <taxon>Rhabditomorpha</taxon>
        <taxon>Rhabditoidea</taxon>
        <taxon>Rhabditidae</taxon>
        <taxon>Peloderinae</taxon>
        <taxon>Caenorhabditis</taxon>
    </lineage>
</organism>
<reference key="1">
    <citation type="journal article" date="1998" name="Science">
        <title>Genome sequence of the nematode C. elegans: a platform for investigating biology.</title>
        <authorList>
            <consortium name="The C. elegans sequencing consortium"/>
        </authorList>
    </citation>
    <scope>NUCLEOTIDE SEQUENCE [LARGE SCALE GENOMIC DNA]</scope>
    <source>
        <strain>Bristol N2</strain>
    </source>
</reference>
<evidence type="ECO:0000255" key="1">
    <source>
        <dbReference type="PROSITE-ProRule" id="PRU10001"/>
    </source>
</evidence>
<evidence type="ECO:0000305" key="2"/>
<keyword id="KW-0444">Lipid biosynthesis</keyword>
<keyword id="KW-0443">Lipid metabolism</keyword>
<keyword id="KW-0521">NADP</keyword>
<keyword id="KW-0560">Oxidoreductase</keyword>
<keyword id="KW-1185">Reference proteome</keyword>
<keyword id="KW-0752">Steroid biosynthesis</keyword>
<comment type="similarity">
    <text evidence="2">Belongs to the short-chain dehydrogenases/reductases (SDR) family. 17-beta-HSD 3 subfamily.</text>
</comment>
<protein>
    <recommendedName>
        <fullName>Putative steroid dehydrogenase 4</fullName>
        <ecNumber>1.1.1.-</ecNumber>
    </recommendedName>
</protein>
<sequence>MKVVTGATDGIGRSYALDLARRGFNIFLISRTKSKLVKTKKQILNKYSDIEVRYAICDFTRVSYEDYKRLLHSLNEVDIGILINNVGMCFDNPEVLHRVEGGIDTLTNVINVNILPVTLLTAGILPQMMARKSGIIVNIGSAAGSIHMAKWSVYSATKKYIEWFTSILQKEYENEGIICQTITPLLVSTNMIKNPLSSIFCPNSDSFAKSSLNTIGNSSSTTGYITHQIQFELIKFVPEIIIDLFVKNLNNQLLDYQLDKKRV</sequence>
<dbReference type="EC" id="1.1.1.-"/>
<dbReference type="EMBL" id="FO080489">
    <property type="protein sequence ID" value="CCD64105.2"/>
    <property type="molecule type" value="Genomic_DNA"/>
</dbReference>
<dbReference type="PIR" id="D89134">
    <property type="entry name" value="D89134"/>
</dbReference>
<dbReference type="RefSeq" id="NP_505205.2">
    <property type="nucleotide sequence ID" value="NM_072804.4"/>
</dbReference>
<dbReference type="SMR" id="O16925"/>
<dbReference type="FunCoup" id="O16925">
    <property type="interactions" value="2249"/>
</dbReference>
<dbReference type="STRING" id="6239.F25G6.5b.1"/>
<dbReference type="PaxDb" id="6239-F25G6.5"/>
<dbReference type="EnsemblMetazoa" id="F25G6.5a.1">
    <property type="protein sequence ID" value="F25G6.5a.1"/>
    <property type="gene ID" value="WBGene00006435"/>
</dbReference>
<dbReference type="GeneID" id="184934"/>
<dbReference type="KEGG" id="cel:CELE_F25G6.5"/>
<dbReference type="AGR" id="WB:WBGene00006435"/>
<dbReference type="CTD" id="184934"/>
<dbReference type="WormBase" id="F25G6.5a">
    <property type="protein sequence ID" value="CE47137"/>
    <property type="gene ID" value="WBGene00006435"/>
    <property type="gene designation" value="stdh-4"/>
</dbReference>
<dbReference type="eggNOG" id="KOG1014">
    <property type="taxonomic scope" value="Eukaryota"/>
</dbReference>
<dbReference type="GeneTree" id="ENSGT00940000165708"/>
<dbReference type="HOGENOM" id="CLU_010194_38_0_1"/>
<dbReference type="InParanoid" id="O16925"/>
<dbReference type="OMA" id="FCASATW"/>
<dbReference type="OrthoDB" id="5545019at2759"/>
<dbReference type="PhylomeDB" id="O16925"/>
<dbReference type="PRO" id="PR:O16925"/>
<dbReference type="Proteomes" id="UP000001940">
    <property type="component" value="Chromosome V"/>
</dbReference>
<dbReference type="Bgee" id="WBGene00006435">
    <property type="expression patterns" value="Expressed in material anatomical entity and 2 other cell types or tissues"/>
</dbReference>
<dbReference type="ExpressionAtlas" id="O16925">
    <property type="expression patterns" value="differential"/>
</dbReference>
<dbReference type="GO" id="GO:0005783">
    <property type="term" value="C:endoplasmic reticulum"/>
    <property type="evidence" value="ECO:0000318"/>
    <property type="project" value="GO_Central"/>
</dbReference>
<dbReference type="GO" id="GO:0016491">
    <property type="term" value="F:oxidoreductase activity"/>
    <property type="evidence" value="ECO:0007669"/>
    <property type="project" value="UniProtKB-KW"/>
</dbReference>
<dbReference type="GO" id="GO:0030497">
    <property type="term" value="P:fatty acid elongation"/>
    <property type="evidence" value="ECO:0000318"/>
    <property type="project" value="GO_Central"/>
</dbReference>
<dbReference type="GO" id="GO:0006694">
    <property type="term" value="P:steroid biosynthetic process"/>
    <property type="evidence" value="ECO:0007669"/>
    <property type="project" value="UniProtKB-KW"/>
</dbReference>
<dbReference type="CDD" id="cd05356">
    <property type="entry name" value="17beta-HSD1_like_SDR_c"/>
    <property type="match status" value="1"/>
</dbReference>
<dbReference type="FunFam" id="3.40.50.720:FF:000467">
    <property type="entry name" value="Steroid dehydrogenase 4"/>
    <property type="match status" value="1"/>
</dbReference>
<dbReference type="Gene3D" id="3.40.50.720">
    <property type="entry name" value="NAD(P)-binding Rossmann-like Domain"/>
    <property type="match status" value="1"/>
</dbReference>
<dbReference type="InterPro" id="IPR036291">
    <property type="entry name" value="NAD(P)-bd_dom_sf"/>
</dbReference>
<dbReference type="InterPro" id="IPR020904">
    <property type="entry name" value="Sc_DH/Rdtase_CS"/>
</dbReference>
<dbReference type="InterPro" id="IPR002347">
    <property type="entry name" value="SDR_fam"/>
</dbReference>
<dbReference type="PANTHER" id="PTHR43086:SF1">
    <property type="entry name" value="STEROID DEHYDROGENASE 1-RELATED"/>
    <property type="match status" value="1"/>
</dbReference>
<dbReference type="PANTHER" id="PTHR43086">
    <property type="entry name" value="VERY-LONG-CHAIN 3-OXOOACYL-COA REDUCTASE"/>
    <property type="match status" value="1"/>
</dbReference>
<dbReference type="Pfam" id="PF00106">
    <property type="entry name" value="adh_short"/>
    <property type="match status" value="1"/>
</dbReference>
<dbReference type="PIRSF" id="PIRSF000126">
    <property type="entry name" value="11-beta-HSD1"/>
    <property type="match status" value="1"/>
</dbReference>
<dbReference type="PRINTS" id="PR00081">
    <property type="entry name" value="GDHRDH"/>
</dbReference>
<dbReference type="PRINTS" id="PR00080">
    <property type="entry name" value="SDRFAMILY"/>
</dbReference>
<dbReference type="SUPFAM" id="SSF51735">
    <property type="entry name" value="NAD(P)-binding Rossmann-fold domains"/>
    <property type="match status" value="1"/>
</dbReference>
<dbReference type="PROSITE" id="PS00061">
    <property type="entry name" value="ADH_SHORT"/>
    <property type="match status" value="1"/>
</dbReference>
<name>STDH4_CAEEL</name>
<feature type="chain" id="PRO_0000054582" description="Putative steroid dehydrogenase 4">
    <location>
        <begin position="1"/>
        <end position="263"/>
    </location>
</feature>
<feature type="active site" description="Proton acceptor" evidence="1">
    <location>
        <position position="154"/>
    </location>
</feature>